<reference key="1">
    <citation type="journal article" date="1994" name="Nature">
        <title>2.2 Mb of contiguous nucleotide sequence from chromosome III of C. elegans.</title>
        <authorList>
            <person name="Wilson R."/>
            <person name="Ainscough R."/>
            <person name="Anderson K."/>
            <person name="Baynes C."/>
            <person name="Berks M."/>
            <person name="Bonfield J."/>
            <person name="Burton J."/>
            <person name="Connell M."/>
            <person name="Copsey T."/>
            <person name="Cooper J."/>
            <person name="Coulson A."/>
            <person name="Craxton M."/>
            <person name="Dear S."/>
            <person name="Du Z."/>
            <person name="Durbin R."/>
            <person name="Favello A."/>
            <person name="Fraser A."/>
            <person name="Fulton L."/>
            <person name="Gardner A."/>
            <person name="Green P."/>
            <person name="Hawkins T."/>
            <person name="Hillier L."/>
            <person name="Jier M."/>
            <person name="Johnston L."/>
            <person name="Jones M."/>
            <person name="Kershaw J."/>
            <person name="Kirsten J."/>
            <person name="Laisster N."/>
            <person name="Latreille P."/>
            <person name="Lightning J."/>
            <person name="Lloyd C."/>
            <person name="Mortimore B."/>
            <person name="O'Callaghan M."/>
            <person name="Parsons J."/>
            <person name="Percy C."/>
            <person name="Rifken L."/>
            <person name="Roopra A."/>
            <person name="Saunders D."/>
            <person name="Shownkeen R."/>
            <person name="Sims M."/>
            <person name="Smaldon N."/>
            <person name="Smith A."/>
            <person name="Smith M."/>
            <person name="Sonnhammer E."/>
            <person name="Staden R."/>
            <person name="Sulston J."/>
            <person name="Thierry-Mieg J."/>
            <person name="Thomas K."/>
            <person name="Vaudin M."/>
            <person name="Vaughan K."/>
            <person name="Waterston R."/>
            <person name="Watson A."/>
            <person name="Weinstock L."/>
            <person name="Wilkinson-Sproat J."/>
            <person name="Wohldman P."/>
        </authorList>
    </citation>
    <scope>NUCLEOTIDE SEQUENCE [LARGE SCALE GENOMIC DNA]</scope>
    <source>
        <strain>Bristol N2</strain>
    </source>
</reference>
<reference key="2">
    <citation type="journal article" date="1998" name="Science">
        <title>Genome sequence of the nematode C. elegans: a platform for investigating biology.</title>
        <authorList>
            <consortium name="The C. elegans sequencing consortium"/>
        </authorList>
    </citation>
    <scope>NUCLEOTIDE SEQUENCE [LARGE SCALE GENOMIC DNA]</scope>
    <source>
        <strain>Bristol N2</strain>
    </source>
</reference>
<accession>Q03564</accession>
<gene>
    <name type="ORF">B0464.6</name>
</gene>
<keyword id="KW-1185">Reference proteome</keyword>
<proteinExistence type="predicted"/>
<dbReference type="EMBL" id="Z19152">
    <property type="protein sequence ID" value="CAA79539.2"/>
    <property type="molecule type" value="Genomic_DNA"/>
</dbReference>
<dbReference type="PIR" id="S28283">
    <property type="entry name" value="S28283"/>
</dbReference>
<dbReference type="RefSeq" id="NP_499083.2">
    <property type="nucleotide sequence ID" value="NM_066682.8"/>
</dbReference>
<dbReference type="BioGRID" id="41526">
    <property type="interactions" value="1"/>
</dbReference>
<dbReference type="FunCoup" id="Q03564">
    <property type="interactions" value="80"/>
</dbReference>
<dbReference type="STRING" id="6239.B0464.6.2"/>
<dbReference type="iPTMnet" id="Q03564"/>
<dbReference type="PaxDb" id="6239-B0464.6.1"/>
<dbReference type="PeptideAtlas" id="Q03564"/>
<dbReference type="EnsemblMetazoa" id="B0464.6.1">
    <property type="protein sequence ID" value="B0464.6.1"/>
    <property type="gene ID" value="WBGene00007186"/>
</dbReference>
<dbReference type="EnsemblMetazoa" id="B0464.6.2">
    <property type="protein sequence ID" value="B0464.6.2"/>
    <property type="gene ID" value="WBGene00007186"/>
</dbReference>
<dbReference type="GeneID" id="176329"/>
<dbReference type="KEGG" id="cel:CELE_B0464.6"/>
<dbReference type="UCSC" id="B0464.6.1">
    <property type="organism name" value="c. elegans"/>
</dbReference>
<dbReference type="AGR" id="WB:WBGene00007186"/>
<dbReference type="CTD" id="176329"/>
<dbReference type="WormBase" id="B0464.6">
    <property type="protein sequence ID" value="CE33965"/>
    <property type="gene ID" value="WBGene00007186"/>
</dbReference>
<dbReference type="eggNOG" id="KOG4670">
    <property type="taxonomic scope" value="Eukaryota"/>
</dbReference>
<dbReference type="GeneTree" id="ENSGT00390000013963"/>
<dbReference type="HOGENOM" id="CLU_426572_0_0_1"/>
<dbReference type="InParanoid" id="Q03564"/>
<dbReference type="OMA" id="GRTEVKM"/>
<dbReference type="OrthoDB" id="509821at2759"/>
<dbReference type="PRO" id="PR:Q03564"/>
<dbReference type="Proteomes" id="UP000001940">
    <property type="component" value="Chromosome III"/>
</dbReference>
<dbReference type="Bgee" id="WBGene00007186">
    <property type="expression patterns" value="Expressed in germ line (C elegans) and 4 other cell types or tissues"/>
</dbReference>
<dbReference type="GO" id="GO:0016020">
    <property type="term" value="C:membrane"/>
    <property type="evidence" value="ECO:0000318"/>
    <property type="project" value="GO_Central"/>
</dbReference>
<dbReference type="InterPro" id="IPR019176">
    <property type="entry name" value="Cytochrome_B561-rel"/>
</dbReference>
<dbReference type="PANTHER" id="PTHR21780">
    <property type="entry name" value="TRANSMEMBRANE PROTEIN 209"/>
    <property type="match status" value="1"/>
</dbReference>
<dbReference type="PANTHER" id="PTHR21780:SF0">
    <property type="entry name" value="TRANSMEMBRANE PROTEIN 209"/>
    <property type="match status" value="1"/>
</dbReference>
<dbReference type="Pfam" id="PF09786">
    <property type="entry name" value="CytochromB561_N"/>
    <property type="match status" value="1"/>
</dbReference>
<feature type="chain" id="PRO_0000065084" description="Uncharacterized protein B0464.6">
    <location>
        <begin position="1"/>
        <end position="643"/>
    </location>
</feature>
<feature type="region of interest" description="Disordered" evidence="1">
    <location>
        <begin position="179"/>
        <end position="200"/>
    </location>
</feature>
<feature type="region of interest" description="Disordered" evidence="1">
    <location>
        <begin position="349"/>
        <end position="377"/>
    </location>
</feature>
<feature type="compositionally biased region" description="Low complexity" evidence="1">
    <location>
        <begin position="179"/>
        <end position="199"/>
    </location>
</feature>
<organism>
    <name type="scientific">Caenorhabditis elegans</name>
    <dbReference type="NCBI Taxonomy" id="6239"/>
    <lineage>
        <taxon>Eukaryota</taxon>
        <taxon>Metazoa</taxon>
        <taxon>Ecdysozoa</taxon>
        <taxon>Nematoda</taxon>
        <taxon>Chromadorea</taxon>
        <taxon>Rhabditida</taxon>
        <taxon>Rhabditina</taxon>
        <taxon>Rhabditomorpha</taxon>
        <taxon>Rhabditoidea</taxon>
        <taxon>Rhabditidae</taxon>
        <taxon>Peloderinae</taxon>
        <taxon>Caenorhabditis</taxon>
    </lineage>
</organism>
<name>YKD6_CAEEL</name>
<protein>
    <recommendedName>
        <fullName>Uncharacterized protein B0464.6</fullName>
    </recommendedName>
</protein>
<evidence type="ECO:0000256" key="1">
    <source>
        <dbReference type="SAM" id="MobiDB-lite"/>
    </source>
</evidence>
<sequence length="643" mass="72615">MTADSLRERLKSQNADYSLLNTSQASNRSAFEDKMSPVCKSRYVNDNQRLEQSRITMLETRIKWHIILLTGFSIDHLVLNSSFTSAILLFGFFPSYVNSSISLFVIIYSLIMIASYAFEIKFPNALKQLVYNKVQSKPPRPESSKSTPIVPDAQNVLDTSVQSNDLSWVDAHRFGTPSFKSSQLQQSPSPNKKSPSYSQVMSNVSVSDTSGILEDTKGGWKSPAVYGKSNESIHTRKQLDVLLRSNQDEIPVDMNTSTFSSIWSVFGLGRSGQISANNTWQVSEEITNDGNTNSSYRMKIGKNGRTEVKMLRRGKDGEIEEEDEDELVRLHKILNAAKLTPEGKTGILKRSNSIDRAGIRSRRRSHSSPERSTSTENEIRYQTGELLTEDQQKRAEFMTRAWIRNTILEPLAEHIDKVNKILDKEHANPPLRVGVSSVDALKLAAIERDSLKSSDLPFLLPFLSVHPNQKYLISRIKELCATQFMDAYKWNSGGSEPTDDNDQMTRLVRREWNDSLPTDAVLVFDIFLAYMDAQLNSNCLVGDSRLDQPFTSRFCVKNAQKPSSAQRTPFSFYLHMVTKSPPHAEFVHIDENGYAIKCNVLRQSPNLFRAIAQFIHFVKHENHGYLDQTSIGPSGINMTYVLA</sequence>